<gene>
    <name evidence="4" type="primary">ahbD</name>
    <name evidence="6" type="ordered locus">Dde_2577</name>
</gene>
<evidence type="ECO:0000255" key="1">
    <source>
        <dbReference type="PROSITE-ProRule" id="PRU01266"/>
    </source>
</evidence>
<evidence type="ECO:0000256" key="2">
    <source>
        <dbReference type="SAM" id="MobiDB-lite"/>
    </source>
</evidence>
<evidence type="ECO:0000269" key="3">
    <source>
    </source>
</evidence>
<evidence type="ECO:0000303" key="4">
    <source>
    </source>
</evidence>
<evidence type="ECO:0000305" key="5"/>
<evidence type="ECO:0000312" key="6">
    <source>
        <dbReference type="EMBL" id="ABB39373.2"/>
    </source>
</evidence>
<keyword id="KW-0004">4Fe-4S</keyword>
<keyword id="KW-0350">Heme biosynthesis</keyword>
<keyword id="KW-0408">Iron</keyword>
<keyword id="KW-0411">Iron-sulfur</keyword>
<keyword id="KW-0479">Metal-binding</keyword>
<keyword id="KW-0560">Oxidoreductase</keyword>
<keyword id="KW-1185">Reference proteome</keyword>
<keyword id="KW-0949">S-adenosyl-L-methionine</keyword>
<feature type="chain" id="PRO_0000450511" description="AdoMet-dependent heme synthase">
    <location>
        <begin position="1"/>
        <end position="388"/>
    </location>
</feature>
<feature type="domain" description="Radical SAM core" evidence="1">
    <location>
        <begin position="34"/>
        <end position="257"/>
    </location>
</feature>
<feature type="region of interest" description="Disordered" evidence="2">
    <location>
        <begin position="1"/>
        <end position="29"/>
    </location>
</feature>
<feature type="compositionally biased region" description="Low complexity" evidence="2">
    <location>
        <begin position="1"/>
        <end position="12"/>
    </location>
</feature>
<feature type="binding site" evidence="1">
    <location>
        <position position="50"/>
    </location>
    <ligand>
        <name>[4Fe-4S] cluster</name>
        <dbReference type="ChEBI" id="CHEBI:49883"/>
        <note>4Fe-4S-S-AdoMet</note>
    </ligand>
</feature>
<feature type="binding site" evidence="1">
    <location>
        <position position="54"/>
    </location>
    <ligand>
        <name>[4Fe-4S] cluster</name>
        <dbReference type="ChEBI" id="CHEBI:49883"/>
        <note>4Fe-4S-S-AdoMet</note>
    </ligand>
</feature>
<feature type="binding site" evidence="1">
    <location>
        <position position="57"/>
    </location>
    <ligand>
        <name>[4Fe-4S] cluster</name>
        <dbReference type="ChEBI" id="CHEBI:49883"/>
        <note>4Fe-4S-S-AdoMet</note>
    </ligand>
</feature>
<dbReference type="EC" id="1.3.98.6" evidence="3"/>
<dbReference type="EMBL" id="CP000112">
    <property type="protein sequence ID" value="ABB39373.2"/>
    <property type="molecule type" value="Genomic_DNA"/>
</dbReference>
<dbReference type="SMR" id="Q30Y73"/>
<dbReference type="STRING" id="207559.Dde_2577"/>
<dbReference type="KEGG" id="dde:Dde_2577"/>
<dbReference type="eggNOG" id="COG0535">
    <property type="taxonomic scope" value="Bacteria"/>
</dbReference>
<dbReference type="HOGENOM" id="CLU_009273_4_0_7"/>
<dbReference type="UniPathway" id="UPA00252"/>
<dbReference type="Proteomes" id="UP000002710">
    <property type="component" value="Chromosome"/>
</dbReference>
<dbReference type="GO" id="GO:0051539">
    <property type="term" value="F:4 iron, 4 sulfur cluster binding"/>
    <property type="evidence" value="ECO:0007669"/>
    <property type="project" value="UniProtKB-KW"/>
</dbReference>
<dbReference type="GO" id="GO:0046872">
    <property type="term" value="F:metal ion binding"/>
    <property type="evidence" value="ECO:0007669"/>
    <property type="project" value="UniProtKB-KW"/>
</dbReference>
<dbReference type="GO" id="GO:0016491">
    <property type="term" value="F:oxidoreductase activity"/>
    <property type="evidence" value="ECO:0007669"/>
    <property type="project" value="UniProtKB-KW"/>
</dbReference>
<dbReference type="GO" id="GO:0006783">
    <property type="term" value="P:heme biosynthetic process"/>
    <property type="evidence" value="ECO:0007669"/>
    <property type="project" value="UniProtKB-KW"/>
</dbReference>
<dbReference type="CDD" id="cd01335">
    <property type="entry name" value="Radical_SAM"/>
    <property type="match status" value="1"/>
</dbReference>
<dbReference type="CDD" id="cd21123">
    <property type="entry name" value="SPASM_MftC-like"/>
    <property type="match status" value="1"/>
</dbReference>
<dbReference type="Gene3D" id="3.20.20.70">
    <property type="entry name" value="Aldolase class I"/>
    <property type="match status" value="1"/>
</dbReference>
<dbReference type="InterPro" id="IPR023885">
    <property type="entry name" value="4Fe4S-binding_SPASM_dom"/>
</dbReference>
<dbReference type="InterPro" id="IPR013785">
    <property type="entry name" value="Aldolase_TIM"/>
</dbReference>
<dbReference type="InterPro" id="IPR034391">
    <property type="entry name" value="Cmo-like_SPASM_containing"/>
</dbReference>
<dbReference type="InterPro" id="IPR006638">
    <property type="entry name" value="Elp3/MiaA/NifB-like_rSAM"/>
</dbReference>
<dbReference type="InterPro" id="IPR017200">
    <property type="entry name" value="PqqE-like"/>
</dbReference>
<dbReference type="InterPro" id="IPR050377">
    <property type="entry name" value="Radical_SAM_PqqE_MftC-like"/>
</dbReference>
<dbReference type="InterPro" id="IPR007197">
    <property type="entry name" value="rSAM"/>
</dbReference>
<dbReference type="InterPro" id="IPR030896">
    <property type="entry name" value="rSAM_AhbD_hemeb"/>
</dbReference>
<dbReference type="NCBIfam" id="TIGR04545">
    <property type="entry name" value="rSAM_ahbD_hemeb"/>
    <property type="match status" value="1"/>
</dbReference>
<dbReference type="NCBIfam" id="TIGR04085">
    <property type="entry name" value="rSAM_more_4Fe4S"/>
    <property type="match status" value="1"/>
</dbReference>
<dbReference type="PANTHER" id="PTHR11228">
    <property type="entry name" value="RADICAL SAM DOMAIN PROTEIN"/>
    <property type="match status" value="1"/>
</dbReference>
<dbReference type="PANTHER" id="PTHR11228:SF34">
    <property type="entry name" value="TUNGSTEN-CONTAINING ALDEHYDE FERREDOXIN OXIDOREDUCTASE COFACTOR MODIFYING PROTEIN"/>
    <property type="match status" value="1"/>
</dbReference>
<dbReference type="Pfam" id="PF13353">
    <property type="entry name" value="Fer4_12"/>
    <property type="match status" value="1"/>
</dbReference>
<dbReference type="Pfam" id="PF04055">
    <property type="entry name" value="Radical_SAM"/>
    <property type="match status" value="1"/>
</dbReference>
<dbReference type="Pfam" id="PF13186">
    <property type="entry name" value="SPASM"/>
    <property type="match status" value="1"/>
</dbReference>
<dbReference type="PIRSF" id="PIRSF037420">
    <property type="entry name" value="PQQ_syn_pqqE"/>
    <property type="match status" value="1"/>
</dbReference>
<dbReference type="SFLD" id="SFLDF00542">
    <property type="entry name" value="alternative_heme_biosynthesis"/>
    <property type="match status" value="1"/>
</dbReference>
<dbReference type="SFLD" id="SFLDG01387">
    <property type="entry name" value="BtrN-like_SPASM_domain_contain"/>
    <property type="match status" value="1"/>
</dbReference>
<dbReference type="SFLD" id="SFLDG01383">
    <property type="entry name" value="cyclic_pyranopterin_phosphate"/>
    <property type="match status" value="1"/>
</dbReference>
<dbReference type="SMART" id="SM00729">
    <property type="entry name" value="Elp3"/>
    <property type="match status" value="1"/>
</dbReference>
<dbReference type="SUPFAM" id="SSF102114">
    <property type="entry name" value="Radical SAM enzymes"/>
    <property type="match status" value="1"/>
</dbReference>
<dbReference type="PROSITE" id="PS51918">
    <property type="entry name" value="RADICAL_SAM"/>
    <property type="match status" value="1"/>
</dbReference>
<comment type="function">
    <text evidence="3">Involved in siroheme-dependent heme b biosynthesis. Catalyzes the conversion of Fe-coproporphyrin III into heme by the oxidative decarboxylation of two propionate side chains.</text>
</comment>
<comment type="catalytic activity">
    <reaction evidence="3">
        <text>Fe-coproporphyrin III + 2 S-adenosyl-L-methionine = heme b + 2 5'-deoxyadenosine + 2 L-methionine + 2 CO2</text>
        <dbReference type="Rhea" id="RHEA:56520"/>
        <dbReference type="ChEBI" id="CHEBI:16526"/>
        <dbReference type="ChEBI" id="CHEBI:17319"/>
        <dbReference type="ChEBI" id="CHEBI:57844"/>
        <dbReference type="ChEBI" id="CHEBI:59789"/>
        <dbReference type="ChEBI" id="CHEBI:60344"/>
        <dbReference type="ChEBI" id="CHEBI:68438"/>
        <dbReference type="EC" id="1.3.98.6"/>
    </reaction>
</comment>
<comment type="cofactor">
    <cofactor evidence="3">
        <name>[4Fe-4S] cluster</name>
        <dbReference type="ChEBI" id="CHEBI:49883"/>
    </cofactor>
</comment>
<comment type="pathway">
    <text evidence="3">Porphyrin-containing compound metabolism; protoheme biosynthesis.</text>
</comment>
<comment type="similarity">
    <text evidence="5">Belongs to the radical SAM superfamily.</text>
</comment>
<accession>Q30Y73</accession>
<sequence>MHNANHPHGNGHPAEKKGMGAHSGAMNMPRTLEDGSPACRLIAWEVTRSCNLACKHCRAEAHTEPYPGELSTQEAKALIDTFPEVGNPIIIFTGGDPMMRADLYELIRYATGLGLRCVLSPNGTLITGQNAVQIREAGVQRCSISIDGPSAELHDEFRGVPGAFEQSMRGIEFLKQAGVEFQINTTVTRDNLPYFKDIFKLCENLGAAAWHIFLLVPTGRAAQLGAQVITAEEYEEVLNWFYDFRKTTSMHLKATCAPHYYRIMRQRAKEEGLPVTPDNFGMDAMTRGCLGGIGFCFISHTGQVQPCGYLELDCGNVRDTRFPEIWRKSEYFRQFRTPEEYDGKCGHCEYHNVCGGCRARGFTMSGSHMAEEPLCTYQPRKKPAADRK</sequence>
<proteinExistence type="evidence at protein level"/>
<name>AHBD_OLEA2</name>
<organism>
    <name type="scientific">Oleidesulfovibrio alaskensis (strain ATCC BAA-1058 / DSM 17464 / G20)</name>
    <name type="common">Desulfovibrio alaskensis</name>
    <dbReference type="NCBI Taxonomy" id="207559"/>
    <lineage>
        <taxon>Bacteria</taxon>
        <taxon>Pseudomonadati</taxon>
        <taxon>Thermodesulfobacteriota</taxon>
        <taxon>Desulfovibrionia</taxon>
        <taxon>Desulfovibrionales</taxon>
        <taxon>Desulfovibrionaceae</taxon>
        <taxon>Oleidesulfovibrio</taxon>
    </lineage>
</organism>
<protein>
    <recommendedName>
        <fullName evidence="5">AdoMet-dependent heme synthase</fullName>
        <ecNumber evidence="3">1.3.98.6</ecNumber>
    </recommendedName>
</protein>
<reference key="1">
    <citation type="journal article" date="2011" name="J. Bacteriol.">
        <title>Complete genome sequence and updated annotation of Desulfovibrio alaskensis G20.</title>
        <authorList>
            <person name="Hauser L.J."/>
            <person name="Land M.L."/>
            <person name="Brown S.D."/>
            <person name="Larimer F."/>
            <person name="Keller K.L."/>
            <person name="Rapp-Giles B.J."/>
            <person name="Price M.N."/>
            <person name="Lin M."/>
            <person name="Bruce D.C."/>
            <person name="Detter J.C."/>
            <person name="Tapia R."/>
            <person name="Han C.S."/>
            <person name="Goodwin L.A."/>
            <person name="Cheng J.F."/>
            <person name="Pitluck S."/>
            <person name="Copeland A."/>
            <person name="Lucas S."/>
            <person name="Nolan M."/>
            <person name="Lapidus A.L."/>
            <person name="Palumbo A.V."/>
            <person name="Wall J.D."/>
        </authorList>
    </citation>
    <scope>NUCLEOTIDE SEQUENCE [LARGE SCALE GENOMIC DNA]</scope>
    <source>
        <strain>ATCC BAA-1058 / DSM 17464 / G20</strain>
    </source>
</reference>
<reference key="2">
    <citation type="journal article" date="2011" name="Proc. Natl. Acad. Sci. U.S.A.">
        <title>Molecular hijacking of siroheme for the synthesis of heme and d1 heme.</title>
        <authorList>
            <person name="Bali S."/>
            <person name="Lawrence A.D."/>
            <person name="Lobo S.A."/>
            <person name="Saraiva L.M."/>
            <person name="Golding B.T."/>
            <person name="Palmer D.J."/>
            <person name="Howard M.J."/>
            <person name="Ferguson S.J."/>
            <person name="Warren M.J."/>
        </authorList>
    </citation>
    <scope>FUNCTION</scope>
    <scope>CATALYTIC ACTIVITY</scope>
    <scope>COFACTOR</scope>
    <scope>PATHWAY</scope>
</reference>